<comment type="similarity">
    <text evidence="1">Belongs to the bacterial ribosomal protein bS21 family.</text>
</comment>
<reference key="1">
    <citation type="journal article" date="2007" name="PLoS Genet.">
        <title>Patterns and implications of gene gain and loss in the evolution of Prochlorococcus.</title>
        <authorList>
            <person name="Kettler G.C."/>
            <person name="Martiny A.C."/>
            <person name="Huang K."/>
            <person name="Zucker J."/>
            <person name="Coleman M.L."/>
            <person name="Rodrigue S."/>
            <person name="Chen F."/>
            <person name="Lapidus A."/>
            <person name="Ferriera S."/>
            <person name="Johnson J."/>
            <person name="Steglich C."/>
            <person name="Church G.M."/>
            <person name="Richardson P."/>
            <person name="Chisholm S.W."/>
        </authorList>
    </citation>
    <scope>NUCLEOTIDE SEQUENCE [LARGE SCALE GENOMIC DNA]</scope>
    <source>
        <strain>AS9601</strain>
    </source>
</reference>
<sequence>MTQVTVGENEGIESALRRFKRQVSKSGIFADLKRLRHHETPIEKYKRKLQQRRKARRR</sequence>
<name>RS21_PROMS</name>
<accession>A2BRE1</accession>
<evidence type="ECO:0000255" key="1">
    <source>
        <dbReference type="HAMAP-Rule" id="MF_00358"/>
    </source>
</evidence>
<evidence type="ECO:0000305" key="2"/>
<feature type="chain" id="PRO_1000005153" description="Small ribosomal subunit protein bS21">
    <location>
        <begin position="1"/>
        <end position="58"/>
    </location>
</feature>
<proteinExistence type="inferred from homology"/>
<organism>
    <name type="scientific">Prochlorococcus marinus (strain AS9601)</name>
    <dbReference type="NCBI Taxonomy" id="146891"/>
    <lineage>
        <taxon>Bacteria</taxon>
        <taxon>Bacillati</taxon>
        <taxon>Cyanobacteriota</taxon>
        <taxon>Cyanophyceae</taxon>
        <taxon>Synechococcales</taxon>
        <taxon>Prochlorococcaceae</taxon>
        <taxon>Prochlorococcus</taxon>
    </lineage>
</organism>
<protein>
    <recommendedName>
        <fullName evidence="1">Small ribosomal subunit protein bS21</fullName>
    </recommendedName>
    <alternativeName>
        <fullName evidence="2">30S ribosomal protein S21</fullName>
    </alternativeName>
</protein>
<dbReference type="EMBL" id="CP000551">
    <property type="protein sequence ID" value="ABM70352.1"/>
    <property type="molecule type" value="Genomic_DNA"/>
</dbReference>
<dbReference type="RefSeq" id="WP_002806486.1">
    <property type="nucleotide sequence ID" value="NC_008816.1"/>
</dbReference>
<dbReference type="SMR" id="A2BRE1"/>
<dbReference type="STRING" id="146891.A9601_10681"/>
<dbReference type="GeneID" id="60201694"/>
<dbReference type="KEGG" id="pmb:A9601_10681"/>
<dbReference type="eggNOG" id="COG0828">
    <property type="taxonomic scope" value="Bacteria"/>
</dbReference>
<dbReference type="HOGENOM" id="CLU_159258_3_1_3"/>
<dbReference type="OrthoDB" id="9799244at2"/>
<dbReference type="Proteomes" id="UP000002590">
    <property type="component" value="Chromosome"/>
</dbReference>
<dbReference type="GO" id="GO:1990904">
    <property type="term" value="C:ribonucleoprotein complex"/>
    <property type="evidence" value="ECO:0007669"/>
    <property type="project" value="UniProtKB-KW"/>
</dbReference>
<dbReference type="GO" id="GO:0005840">
    <property type="term" value="C:ribosome"/>
    <property type="evidence" value="ECO:0007669"/>
    <property type="project" value="UniProtKB-KW"/>
</dbReference>
<dbReference type="GO" id="GO:0003735">
    <property type="term" value="F:structural constituent of ribosome"/>
    <property type="evidence" value="ECO:0007669"/>
    <property type="project" value="InterPro"/>
</dbReference>
<dbReference type="GO" id="GO:0006412">
    <property type="term" value="P:translation"/>
    <property type="evidence" value="ECO:0007669"/>
    <property type="project" value="UniProtKB-UniRule"/>
</dbReference>
<dbReference type="Gene3D" id="1.20.5.1150">
    <property type="entry name" value="Ribosomal protein S8"/>
    <property type="match status" value="1"/>
</dbReference>
<dbReference type="HAMAP" id="MF_00358">
    <property type="entry name" value="Ribosomal_bS21"/>
    <property type="match status" value="1"/>
</dbReference>
<dbReference type="InterPro" id="IPR001911">
    <property type="entry name" value="Ribosomal_bS21"/>
</dbReference>
<dbReference type="InterPro" id="IPR018278">
    <property type="entry name" value="Ribosomal_bS21_CS"/>
</dbReference>
<dbReference type="InterPro" id="IPR038380">
    <property type="entry name" value="Ribosomal_bS21_sf"/>
</dbReference>
<dbReference type="NCBIfam" id="TIGR00030">
    <property type="entry name" value="S21p"/>
    <property type="match status" value="1"/>
</dbReference>
<dbReference type="PANTHER" id="PTHR21109">
    <property type="entry name" value="MITOCHONDRIAL 28S RIBOSOMAL PROTEIN S21"/>
    <property type="match status" value="1"/>
</dbReference>
<dbReference type="PANTHER" id="PTHR21109:SF0">
    <property type="entry name" value="SMALL RIBOSOMAL SUBUNIT PROTEIN BS21M"/>
    <property type="match status" value="1"/>
</dbReference>
<dbReference type="Pfam" id="PF01165">
    <property type="entry name" value="Ribosomal_S21"/>
    <property type="match status" value="1"/>
</dbReference>
<dbReference type="PRINTS" id="PR00976">
    <property type="entry name" value="RIBOSOMALS21"/>
</dbReference>
<dbReference type="PROSITE" id="PS01181">
    <property type="entry name" value="RIBOSOMAL_S21"/>
    <property type="match status" value="1"/>
</dbReference>
<keyword id="KW-0687">Ribonucleoprotein</keyword>
<keyword id="KW-0689">Ribosomal protein</keyword>
<gene>
    <name evidence="1" type="primary">rpsU</name>
    <name evidence="1" type="synonym">rps21</name>
    <name type="ordered locus">A9601_10681</name>
</gene>